<keyword id="KW-0687">Ribonucleoprotein</keyword>
<keyword id="KW-0689">Ribosomal protein</keyword>
<keyword id="KW-0694">RNA-binding</keyword>
<keyword id="KW-0699">rRNA-binding</keyword>
<reference key="1">
    <citation type="submission" date="2009-07" db="EMBL/GenBank/DDBJ databases">
        <title>Complete sequence of Pectobacterium carotovorum subsp. carotovorum PC1.</title>
        <authorList>
            <consortium name="US DOE Joint Genome Institute"/>
            <person name="Lucas S."/>
            <person name="Copeland A."/>
            <person name="Lapidus A."/>
            <person name="Glavina del Rio T."/>
            <person name="Tice H."/>
            <person name="Bruce D."/>
            <person name="Goodwin L."/>
            <person name="Pitluck S."/>
            <person name="Munk A.C."/>
            <person name="Brettin T."/>
            <person name="Detter J.C."/>
            <person name="Han C."/>
            <person name="Tapia R."/>
            <person name="Larimer F."/>
            <person name="Land M."/>
            <person name="Hauser L."/>
            <person name="Kyrpides N."/>
            <person name="Mikhailova N."/>
            <person name="Balakrishnan V."/>
            <person name="Glasner J."/>
            <person name="Perna N.T."/>
        </authorList>
    </citation>
    <scope>NUCLEOTIDE SEQUENCE [LARGE SCALE GENOMIC DNA]</scope>
    <source>
        <strain>PC1</strain>
    </source>
</reference>
<organism>
    <name type="scientific">Pectobacterium carotovorum subsp. carotovorum (strain PC1)</name>
    <dbReference type="NCBI Taxonomy" id="561230"/>
    <lineage>
        <taxon>Bacteria</taxon>
        <taxon>Pseudomonadati</taxon>
        <taxon>Pseudomonadota</taxon>
        <taxon>Gammaproteobacteria</taxon>
        <taxon>Enterobacterales</taxon>
        <taxon>Pectobacteriaceae</taxon>
        <taxon>Pectobacterium</taxon>
    </lineage>
</organism>
<dbReference type="EMBL" id="CP001657">
    <property type="protein sequence ID" value="ACT14670.1"/>
    <property type="molecule type" value="Genomic_DNA"/>
</dbReference>
<dbReference type="RefSeq" id="WP_005973217.1">
    <property type="nucleotide sequence ID" value="NC_012917.1"/>
</dbReference>
<dbReference type="SMR" id="C6DF06"/>
<dbReference type="STRING" id="561230.PC1_3655"/>
<dbReference type="GeneID" id="90764944"/>
<dbReference type="KEGG" id="pct:PC1_3655"/>
<dbReference type="eggNOG" id="COG0268">
    <property type="taxonomic scope" value="Bacteria"/>
</dbReference>
<dbReference type="HOGENOM" id="CLU_160655_4_0_6"/>
<dbReference type="OrthoDB" id="9807974at2"/>
<dbReference type="Proteomes" id="UP000002736">
    <property type="component" value="Chromosome"/>
</dbReference>
<dbReference type="GO" id="GO:0005829">
    <property type="term" value="C:cytosol"/>
    <property type="evidence" value="ECO:0007669"/>
    <property type="project" value="TreeGrafter"/>
</dbReference>
<dbReference type="GO" id="GO:0015935">
    <property type="term" value="C:small ribosomal subunit"/>
    <property type="evidence" value="ECO:0007669"/>
    <property type="project" value="TreeGrafter"/>
</dbReference>
<dbReference type="GO" id="GO:0070181">
    <property type="term" value="F:small ribosomal subunit rRNA binding"/>
    <property type="evidence" value="ECO:0007669"/>
    <property type="project" value="TreeGrafter"/>
</dbReference>
<dbReference type="GO" id="GO:0003735">
    <property type="term" value="F:structural constituent of ribosome"/>
    <property type="evidence" value="ECO:0007669"/>
    <property type="project" value="InterPro"/>
</dbReference>
<dbReference type="GO" id="GO:0006412">
    <property type="term" value="P:translation"/>
    <property type="evidence" value="ECO:0007669"/>
    <property type="project" value="UniProtKB-UniRule"/>
</dbReference>
<dbReference type="FunFam" id="1.20.58.110:FF:000001">
    <property type="entry name" value="30S ribosomal protein S20"/>
    <property type="match status" value="1"/>
</dbReference>
<dbReference type="Gene3D" id="1.20.58.110">
    <property type="entry name" value="Ribosomal protein S20"/>
    <property type="match status" value="1"/>
</dbReference>
<dbReference type="HAMAP" id="MF_00500">
    <property type="entry name" value="Ribosomal_bS20"/>
    <property type="match status" value="1"/>
</dbReference>
<dbReference type="InterPro" id="IPR002583">
    <property type="entry name" value="Ribosomal_bS20"/>
</dbReference>
<dbReference type="InterPro" id="IPR036510">
    <property type="entry name" value="Ribosomal_bS20_sf"/>
</dbReference>
<dbReference type="NCBIfam" id="TIGR00029">
    <property type="entry name" value="S20"/>
    <property type="match status" value="1"/>
</dbReference>
<dbReference type="PANTHER" id="PTHR33398">
    <property type="entry name" value="30S RIBOSOMAL PROTEIN S20"/>
    <property type="match status" value="1"/>
</dbReference>
<dbReference type="PANTHER" id="PTHR33398:SF1">
    <property type="entry name" value="SMALL RIBOSOMAL SUBUNIT PROTEIN BS20C"/>
    <property type="match status" value="1"/>
</dbReference>
<dbReference type="Pfam" id="PF01649">
    <property type="entry name" value="Ribosomal_S20p"/>
    <property type="match status" value="1"/>
</dbReference>
<dbReference type="SUPFAM" id="SSF46992">
    <property type="entry name" value="Ribosomal protein S20"/>
    <property type="match status" value="1"/>
</dbReference>
<proteinExistence type="inferred from homology"/>
<evidence type="ECO:0000255" key="1">
    <source>
        <dbReference type="HAMAP-Rule" id="MF_00500"/>
    </source>
</evidence>
<evidence type="ECO:0000256" key="2">
    <source>
        <dbReference type="SAM" id="MobiDB-lite"/>
    </source>
</evidence>
<evidence type="ECO:0000305" key="3"/>
<comment type="function">
    <text evidence="1">Binds directly to 16S ribosomal RNA.</text>
</comment>
<comment type="similarity">
    <text evidence="1">Belongs to the bacterial ribosomal protein bS20 family.</text>
</comment>
<gene>
    <name evidence="1" type="primary">rpsT</name>
    <name type="ordered locus">PC1_3655</name>
</gene>
<sequence length="87" mass="9846">MANIKSAKKRAVQSEKRRKHNASRRSMMRTFIKKVYAAIATGDKEVAQKAFNDMQPIVDRQAGKGLIHKNKAARHKSNLVARINAMQ</sequence>
<feature type="chain" id="PRO_1000206506" description="Small ribosomal subunit protein bS20">
    <location>
        <begin position="1"/>
        <end position="87"/>
    </location>
</feature>
<feature type="region of interest" description="Disordered" evidence="2">
    <location>
        <begin position="1"/>
        <end position="27"/>
    </location>
</feature>
<name>RS20_PECCP</name>
<protein>
    <recommendedName>
        <fullName evidence="1">Small ribosomal subunit protein bS20</fullName>
    </recommendedName>
    <alternativeName>
        <fullName evidence="3">30S ribosomal protein S20</fullName>
    </alternativeName>
</protein>
<accession>C6DF06</accession>